<feature type="initiator methionine" description="Removed" evidence="2">
    <location>
        <position position="1"/>
    </location>
</feature>
<feature type="chain" id="PRO_0000294478" description="Protein C10">
    <location>
        <begin position="2"/>
        <end position="132"/>
    </location>
</feature>
<feature type="modified residue" description="N-acetylalanine" evidence="2">
    <location>
        <position position="2"/>
    </location>
</feature>
<keyword id="KW-0007">Acetylation</keyword>
<keyword id="KW-0963">Cytoplasm</keyword>
<keyword id="KW-1185">Reference proteome</keyword>
<comment type="function">
    <text evidence="1">In brain, may be required for corpus callosum development.</text>
</comment>
<comment type="subcellular location">
    <subcellularLocation>
        <location evidence="1">Cytoplasm</location>
    </subcellularLocation>
</comment>
<comment type="similarity">
    <text evidence="3">Belongs to the UPF0456 family.</text>
</comment>
<proteinExistence type="evidence at transcript level"/>
<reference key="1">
    <citation type="submission" date="2005-11" db="EMBL/GenBank/DDBJ databases">
        <authorList>
            <consortium name="NIH - Mammalian Gene Collection (MGC) project"/>
        </authorList>
    </citation>
    <scope>NUCLEOTIDE SEQUENCE [LARGE SCALE MRNA]</scope>
    <source>
        <strain>Crossbred X Angus</strain>
        <tissue>Liver</tissue>
    </source>
</reference>
<name>C10_BOVIN</name>
<sequence length="132" mass="13719">MASASAQSAALSAEQAKVVLAEVIQAFSAPENAVRMDEARDNACNDMGKMLQFVLPVATQIQQEVIKAYGFSCDGEGVLKFARLVKSYEAQDPEIASLSGKLKALFLPPMTLPPHGPASGGSVAASLGLALP</sequence>
<protein>
    <recommendedName>
        <fullName>Protein C10</fullName>
    </recommendedName>
</protein>
<accession>Q32KM2</accession>
<organism>
    <name type="scientific">Bos taurus</name>
    <name type="common">Bovine</name>
    <dbReference type="NCBI Taxonomy" id="9913"/>
    <lineage>
        <taxon>Eukaryota</taxon>
        <taxon>Metazoa</taxon>
        <taxon>Chordata</taxon>
        <taxon>Craniata</taxon>
        <taxon>Vertebrata</taxon>
        <taxon>Euteleostomi</taxon>
        <taxon>Mammalia</taxon>
        <taxon>Eutheria</taxon>
        <taxon>Laurasiatheria</taxon>
        <taxon>Artiodactyla</taxon>
        <taxon>Ruminantia</taxon>
        <taxon>Pecora</taxon>
        <taxon>Bovidae</taxon>
        <taxon>Bovinae</taxon>
        <taxon>Bos</taxon>
    </lineage>
</organism>
<evidence type="ECO:0000250" key="1"/>
<evidence type="ECO:0000250" key="2">
    <source>
        <dbReference type="UniProtKB" id="Q99622"/>
    </source>
</evidence>
<evidence type="ECO:0000305" key="3"/>
<dbReference type="EMBL" id="BC110027">
    <property type="protein sequence ID" value="AAI10028.1"/>
    <property type="molecule type" value="mRNA"/>
</dbReference>
<dbReference type="RefSeq" id="NP_001068993.1">
    <property type="nucleotide sequence ID" value="NM_001075525.1"/>
</dbReference>
<dbReference type="SMR" id="Q32KM2"/>
<dbReference type="FunCoup" id="Q32KM2">
    <property type="interactions" value="186"/>
</dbReference>
<dbReference type="PaxDb" id="9913-ENSBTAP00000027044"/>
<dbReference type="GeneID" id="511545"/>
<dbReference type="KEGG" id="bta:511545"/>
<dbReference type="CTD" id="511545"/>
<dbReference type="eggNOG" id="ENOG502RYWR">
    <property type="taxonomic scope" value="Eukaryota"/>
</dbReference>
<dbReference type="HOGENOM" id="CLU_144250_1_0_1"/>
<dbReference type="InParanoid" id="Q32KM2"/>
<dbReference type="OrthoDB" id="75738at2759"/>
<dbReference type="Proteomes" id="UP000009136">
    <property type="component" value="Unplaced"/>
</dbReference>
<dbReference type="GO" id="GO:0005737">
    <property type="term" value="C:cytoplasm"/>
    <property type="evidence" value="ECO:0007669"/>
    <property type="project" value="UniProtKB-SubCell"/>
</dbReference>
<dbReference type="GO" id="GO:0009791">
    <property type="term" value="P:post-embryonic development"/>
    <property type="evidence" value="ECO:0000318"/>
    <property type="project" value="GO_Central"/>
</dbReference>
<dbReference type="InterPro" id="IPR026317">
    <property type="entry name" value="P_C10"/>
</dbReference>
<dbReference type="PANTHER" id="PTHR13463">
    <property type="entry name" value="PROTEIN C10"/>
    <property type="match status" value="1"/>
</dbReference>
<dbReference type="PANTHER" id="PTHR13463:SF3">
    <property type="entry name" value="PROTEIN C10"/>
    <property type="match status" value="1"/>
</dbReference>
<dbReference type="Pfam" id="PF14974">
    <property type="entry name" value="P_C10"/>
    <property type="match status" value="1"/>
</dbReference>